<keyword id="KW-0240">DNA-directed RNA polymerase</keyword>
<keyword id="KW-0548">Nucleotidyltransferase</keyword>
<keyword id="KW-1185">Reference proteome</keyword>
<keyword id="KW-0804">Transcription</keyword>
<keyword id="KW-0808">Transferase</keyword>
<evidence type="ECO:0000255" key="1">
    <source>
        <dbReference type="HAMAP-Rule" id="MF_01321"/>
    </source>
</evidence>
<evidence type="ECO:0000305" key="2"/>
<name>RPOB_ALBFT</name>
<comment type="function">
    <text evidence="1">DNA-dependent RNA polymerase catalyzes the transcription of DNA into RNA using the four ribonucleoside triphosphates as substrates.</text>
</comment>
<comment type="catalytic activity">
    <reaction evidence="1">
        <text>RNA(n) + a ribonucleoside 5'-triphosphate = RNA(n+1) + diphosphate</text>
        <dbReference type="Rhea" id="RHEA:21248"/>
        <dbReference type="Rhea" id="RHEA-COMP:14527"/>
        <dbReference type="Rhea" id="RHEA-COMP:17342"/>
        <dbReference type="ChEBI" id="CHEBI:33019"/>
        <dbReference type="ChEBI" id="CHEBI:61557"/>
        <dbReference type="ChEBI" id="CHEBI:140395"/>
        <dbReference type="EC" id="2.7.7.6"/>
    </reaction>
</comment>
<comment type="subunit">
    <text evidence="1">The RNAP catalytic core consists of 2 alpha, 1 beta, 1 beta' and 1 omega subunit. When a sigma factor is associated with the core the holoenzyme is formed, which can initiate transcription.</text>
</comment>
<comment type="similarity">
    <text evidence="1">Belongs to the RNA polymerase beta chain family.</text>
</comment>
<comment type="sequence caution" evidence="2">
    <conflict type="erroneous initiation">
        <sequence resource="EMBL-CDS" id="ABD71296"/>
    </conflict>
</comment>
<proteinExistence type="inferred from homology"/>
<reference key="1">
    <citation type="submission" date="2006-02" db="EMBL/GenBank/DDBJ databases">
        <title>Complete sequence of chromosome of Rhodoferax ferrireducens DSM 15236.</title>
        <authorList>
            <person name="Copeland A."/>
            <person name="Lucas S."/>
            <person name="Lapidus A."/>
            <person name="Barry K."/>
            <person name="Detter J.C."/>
            <person name="Glavina del Rio T."/>
            <person name="Hammon N."/>
            <person name="Israni S."/>
            <person name="Pitluck S."/>
            <person name="Brettin T."/>
            <person name="Bruce D."/>
            <person name="Han C."/>
            <person name="Tapia R."/>
            <person name="Gilna P."/>
            <person name="Kiss H."/>
            <person name="Schmutz J."/>
            <person name="Larimer F."/>
            <person name="Land M."/>
            <person name="Kyrpides N."/>
            <person name="Ivanova N."/>
            <person name="Richardson P."/>
        </authorList>
    </citation>
    <scope>NUCLEOTIDE SEQUENCE [LARGE SCALE GENOMIC DNA]</scope>
    <source>
        <strain>ATCC BAA-621 / DSM 15236 / T118</strain>
    </source>
</reference>
<feature type="chain" id="PRO_0000300386" description="DNA-directed RNA polymerase subunit beta">
    <location>
        <begin position="1"/>
        <end position="1370"/>
    </location>
</feature>
<accession>Q21SF7</accession>
<organism>
    <name type="scientific">Albidiferax ferrireducens (strain ATCC BAA-621 / DSM 15236 / T118)</name>
    <name type="common">Rhodoferax ferrireducens</name>
    <dbReference type="NCBI Taxonomy" id="338969"/>
    <lineage>
        <taxon>Bacteria</taxon>
        <taxon>Pseudomonadati</taxon>
        <taxon>Pseudomonadota</taxon>
        <taxon>Betaproteobacteria</taxon>
        <taxon>Burkholderiales</taxon>
        <taxon>Comamonadaceae</taxon>
        <taxon>Rhodoferax</taxon>
    </lineage>
</organism>
<dbReference type="EC" id="2.7.7.6" evidence="1"/>
<dbReference type="EMBL" id="CP000267">
    <property type="protein sequence ID" value="ABD71296.1"/>
    <property type="status" value="ALT_INIT"/>
    <property type="molecule type" value="Genomic_DNA"/>
</dbReference>
<dbReference type="RefSeq" id="WP_041790955.1">
    <property type="nucleotide sequence ID" value="NC_007908.1"/>
</dbReference>
<dbReference type="SMR" id="Q21SF7"/>
<dbReference type="STRING" id="338969.Rfer_3592"/>
<dbReference type="KEGG" id="rfr:Rfer_3592"/>
<dbReference type="eggNOG" id="COG0085">
    <property type="taxonomic scope" value="Bacteria"/>
</dbReference>
<dbReference type="HOGENOM" id="CLU_000524_4_0_4"/>
<dbReference type="OrthoDB" id="9803954at2"/>
<dbReference type="Proteomes" id="UP000008332">
    <property type="component" value="Chromosome"/>
</dbReference>
<dbReference type="GO" id="GO:0000428">
    <property type="term" value="C:DNA-directed RNA polymerase complex"/>
    <property type="evidence" value="ECO:0007669"/>
    <property type="project" value="UniProtKB-KW"/>
</dbReference>
<dbReference type="GO" id="GO:0003677">
    <property type="term" value="F:DNA binding"/>
    <property type="evidence" value="ECO:0007669"/>
    <property type="project" value="UniProtKB-UniRule"/>
</dbReference>
<dbReference type="GO" id="GO:0003899">
    <property type="term" value="F:DNA-directed RNA polymerase activity"/>
    <property type="evidence" value="ECO:0007669"/>
    <property type="project" value="UniProtKB-UniRule"/>
</dbReference>
<dbReference type="GO" id="GO:0032549">
    <property type="term" value="F:ribonucleoside binding"/>
    <property type="evidence" value="ECO:0007669"/>
    <property type="project" value="InterPro"/>
</dbReference>
<dbReference type="GO" id="GO:0006351">
    <property type="term" value="P:DNA-templated transcription"/>
    <property type="evidence" value="ECO:0007669"/>
    <property type="project" value="UniProtKB-UniRule"/>
</dbReference>
<dbReference type="CDD" id="cd00653">
    <property type="entry name" value="RNA_pol_B_RPB2"/>
    <property type="match status" value="1"/>
</dbReference>
<dbReference type="FunFam" id="2.40.50.100:FF:000006">
    <property type="entry name" value="DNA-directed RNA polymerase subunit beta"/>
    <property type="match status" value="1"/>
</dbReference>
<dbReference type="FunFam" id="3.90.1800.10:FF:000001">
    <property type="entry name" value="DNA-directed RNA polymerase subunit beta"/>
    <property type="match status" value="1"/>
</dbReference>
<dbReference type="Gene3D" id="2.40.50.100">
    <property type="match status" value="1"/>
</dbReference>
<dbReference type="Gene3D" id="2.40.50.150">
    <property type="match status" value="1"/>
</dbReference>
<dbReference type="Gene3D" id="3.90.1100.10">
    <property type="match status" value="2"/>
</dbReference>
<dbReference type="Gene3D" id="6.10.140.1670">
    <property type="match status" value="1"/>
</dbReference>
<dbReference type="Gene3D" id="2.30.150.10">
    <property type="entry name" value="DNA-directed RNA polymerase, beta subunit, external 1 domain"/>
    <property type="match status" value="1"/>
</dbReference>
<dbReference type="Gene3D" id="2.40.270.10">
    <property type="entry name" value="DNA-directed RNA polymerase, subunit 2, domain 6"/>
    <property type="match status" value="1"/>
</dbReference>
<dbReference type="Gene3D" id="3.90.1800.10">
    <property type="entry name" value="RNA polymerase alpha subunit dimerisation domain"/>
    <property type="match status" value="1"/>
</dbReference>
<dbReference type="Gene3D" id="3.90.1110.10">
    <property type="entry name" value="RNA polymerase Rpb2, domain 2"/>
    <property type="match status" value="1"/>
</dbReference>
<dbReference type="HAMAP" id="MF_01321">
    <property type="entry name" value="RNApol_bact_RpoB"/>
    <property type="match status" value="1"/>
</dbReference>
<dbReference type="InterPro" id="IPR042107">
    <property type="entry name" value="DNA-dir_RNA_pol_bsu_ext_1_sf"/>
</dbReference>
<dbReference type="InterPro" id="IPR019462">
    <property type="entry name" value="DNA-dir_RNA_pol_bsu_external_1"/>
</dbReference>
<dbReference type="InterPro" id="IPR015712">
    <property type="entry name" value="DNA-dir_RNA_pol_su2"/>
</dbReference>
<dbReference type="InterPro" id="IPR007120">
    <property type="entry name" value="DNA-dir_RNAP_su2_dom"/>
</dbReference>
<dbReference type="InterPro" id="IPR037033">
    <property type="entry name" value="DNA-dir_RNAP_su2_hyb_sf"/>
</dbReference>
<dbReference type="InterPro" id="IPR010243">
    <property type="entry name" value="RNA_pol_bsu_bac"/>
</dbReference>
<dbReference type="InterPro" id="IPR007121">
    <property type="entry name" value="RNA_pol_bsu_CS"/>
</dbReference>
<dbReference type="InterPro" id="IPR007644">
    <property type="entry name" value="RNA_pol_bsu_protrusion"/>
</dbReference>
<dbReference type="InterPro" id="IPR007642">
    <property type="entry name" value="RNA_pol_Rpb2_2"/>
</dbReference>
<dbReference type="InterPro" id="IPR037034">
    <property type="entry name" value="RNA_pol_Rpb2_2_sf"/>
</dbReference>
<dbReference type="InterPro" id="IPR007645">
    <property type="entry name" value="RNA_pol_Rpb2_3"/>
</dbReference>
<dbReference type="InterPro" id="IPR007641">
    <property type="entry name" value="RNA_pol_Rpb2_7"/>
</dbReference>
<dbReference type="InterPro" id="IPR014724">
    <property type="entry name" value="RNA_pol_RPB2_OB-fold"/>
</dbReference>
<dbReference type="NCBIfam" id="NF001616">
    <property type="entry name" value="PRK00405.1"/>
    <property type="match status" value="1"/>
</dbReference>
<dbReference type="NCBIfam" id="TIGR02013">
    <property type="entry name" value="rpoB"/>
    <property type="match status" value="1"/>
</dbReference>
<dbReference type="PANTHER" id="PTHR20856">
    <property type="entry name" value="DNA-DIRECTED RNA POLYMERASE I SUBUNIT 2"/>
    <property type="match status" value="1"/>
</dbReference>
<dbReference type="Pfam" id="PF04563">
    <property type="entry name" value="RNA_pol_Rpb2_1"/>
    <property type="match status" value="1"/>
</dbReference>
<dbReference type="Pfam" id="PF04561">
    <property type="entry name" value="RNA_pol_Rpb2_2"/>
    <property type="match status" value="2"/>
</dbReference>
<dbReference type="Pfam" id="PF04565">
    <property type="entry name" value="RNA_pol_Rpb2_3"/>
    <property type="match status" value="1"/>
</dbReference>
<dbReference type="Pfam" id="PF10385">
    <property type="entry name" value="RNA_pol_Rpb2_45"/>
    <property type="match status" value="1"/>
</dbReference>
<dbReference type="Pfam" id="PF00562">
    <property type="entry name" value="RNA_pol_Rpb2_6"/>
    <property type="match status" value="1"/>
</dbReference>
<dbReference type="Pfam" id="PF04560">
    <property type="entry name" value="RNA_pol_Rpb2_7"/>
    <property type="match status" value="1"/>
</dbReference>
<dbReference type="SUPFAM" id="SSF64484">
    <property type="entry name" value="beta and beta-prime subunits of DNA dependent RNA-polymerase"/>
    <property type="match status" value="1"/>
</dbReference>
<dbReference type="PROSITE" id="PS01166">
    <property type="entry name" value="RNA_POL_BETA"/>
    <property type="match status" value="1"/>
</dbReference>
<gene>
    <name evidence="1" type="primary">rpoB</name>
    <name type="ordered locus">Rfer_3592</name>
</gene>
<protein>
    <recommendedName>
        <fullName evidence="1">DNA-directed RNA polymerase subunit beta</fullName>
        <shortName evidence="1">RNAP subunit beta</shortName>
        <ecNumber evidence="1">2.7.7.6</ecNumber>
    </recommendedName>
    <alternativeName>
        <fullName evidence="1">RNA polymerase subunit beta</fullName>
    </alternativeName>
    <alternativeName>
        <fullName evidence="1">Transcriptase subunit beta</fullName>
    </alternativeName>
</protein>
<sequence length="1370" mass="152755">MAYSYTERKRIRKNFGSRDSVLEIPYLLQMQKDAYTAFLQADVHPKKRTAEGLQAAFEAAFPIISHNGFVEMKYLEYNLAKPAFDVRECQTRGLTFASAVRAKVQLFIYDRESSTSQNKVIKEVKEQEVYMGEVPLMTTKGSFIINGTERVIVSQLHRSPGVFFEHDKGKTHSSGKLLFSARIIPYRGSWLDFEFDPKDFLYFRVDRRRKMPVTILLKAIGLNHESILANFFVNDNFRLMDSGAQMEFVAERLRGEVARFDITDKSGKVIVAKEKRVTARHTRELEQSGTTHISVPEDFLLGRVVARNIVDTDTGEILAKANEELTEALIKKLRLAGVQDLPCIYTNELDQGAYISQTLRSDETVDEFAARVAIYRMMRPGEPPTEDAVQALFQRLFYNPDTYDLSRVGRMKFNAKMGRPESTGPMVLTNEDILAVVKILVDLRNGRGDVDDIDHLGNRRVRCVGELAENQYRTGLARIEKAVKERLGQAEQEPLMPHDLINSKPISAALKEFFGASQLSQFMDQTNPLSEITHKRRVSALGPGGLTRERAGFEVRDVHVTHYGRVCPIETPEGPNIGLINSLALYARLNDYGFIETPYRRVVDGKVTMEIDYLSAIEEGKFVIAQANAVLDKDGKLTGEMISAREAGETIFAGPERVQYMDVSPAQIVSVAASLVPFLEHDDANRALMGANMSRQAVPILRPEKPMVGTGIERVAAIDSGTVVTATRGGMVDYVDATRVVIRVNDDEAQAGEVGVDIYNLIKYQRSNQNTNIHQRPIVKKGDMLAKGDVIADGASTDLGELALGQNMLIGFMTWNGYNFEDSILISERVVADDRYTSIHIEELVVMARDTKLGCEEITRDIPNLSEQQLNRLDESGIIYVGAEVQPGDTLVGKVTPKGETTLTPEEKLLRAIFGEKASDVKDTSLRVDQGSQGTVIDVQVFTREGIVRDRRAQQIIDDELKRFRLDLNDQLRLVEADSFDRIEKLLVGKVANGGPQKLAKGTTIDKAYLTSVEKHHWFDIRPAEDDVAAQLESIKNSMEQTRHSFDLAFEEKRKKLTQGDELPAGVLKMVKVYLAVKRHLQPGDKMAGRHGNKGVVSKIVPVEDMPFMADGTPCDIVLNPLGVPSRMNIGQVLEVHLGWAAKGIGQRIGDMLQAEAKVAELRKFLDELYNGTGRKEDLAQLSDDEVLEMAGNLTSGVPFATPVFDGASEADIGAMLKLAYPEDAIRQKGLTPARTQAYLYDGRTGDPFERPTTIGYMHYLKLHHLVDDKMHARSTGPYSLVTQQPLGGKAQFGGQRFGEMEVWALEAYGAAYTLQEMLTVKSDDVQGRTKVYESIVKGEHSIEAGMPESFNVLVKEIRSLGIDIELERG</sequence>